<protein>
    <recommendedName>
        <fullName evidence="1">Small ribosomal subunit protein bS20</fullName>
    </recommendedName>
    <alternativeName>
        <fullName evidence="2">30S ribosomal protein S20</fullName>
    </alternativeName>
</protein>
<name>RS20_ANAMM</name>
<sequence length="96" mass="10720">MPNHSSAKKMVRVIKERTFSNRVRKSRVRNSVKKFLAVLESKGHLEDAVTAFRAAESNIHKCVNKGVMHRNTAARKVKSLAAKLKAFDLSLQGTST</sequence>
<gene>
    <name evidence="1" type="primary">rpsT</name>
    <name type="ordered locus">AM1233</name>
</gene>
<feature type="chain" id="PRO_0000167903" description="Small ribosomal subunit protein bS20">
    <location>
        <begin position="1"/>
        <end position="96"/>
    </location>
</feature>
<comment type="function">
    <text evidence="1">Binds directly to 16S ribosomal RNA.</text>
</comment>
<comment type="similarity">
    <text evidence="1">Belongs to the bacterial ribosomal protein bS20 family.</text>
</comment>
<comment type="sequence caution" evidence="2">
    <conflict type="erroneous initiation">
        <sequence resource="EMBL-CDS" id="AAV87048"/>
    </conflict>
</comment>
<organism>
    <name type="scientific">Anaplasma marginale (strain St. Maries)</name>
    <dbReference type="NCBI Taxonomy" id="234826"/>
    <lineage>
        <taxon>Bacteria</taxon>
        <taxon>Pseudomonadati</taxon>
        <taxon>Pseudomonadota</taxon>
        <taxon>Alphaproteobacteria</taxon>
        <taxon>Rickettsiales</taxon>
        <taxon>Anaplasmataceae</taxon>
        <taxon>Anaplasma</taxon>
    </lineage>
</organism>
<evidence type="ECO:0000255" key="1">
    <source>
        <dbReference type="HAMAP-Rule" id="MF_00500"/>
    </source>
</evidence>
<evidence type="ECO:0000305" key="2"/>
<proteinExistence type="inferred from homology"/>
<keyword id="KW-0687">Ribonucleoprotein</keyword>
<keyword id="KW-0689">Ribosomal protein</keyword>
<keyword id="KW-0694">RNA-binding</keyword>
<keyword id="KW-0699">rRNA-binding</keyword>
<reference key="1">
    <citation type="journal article" date="2005" name="Proc. Natl. Acad. Sci. U.S.A.">
        <title>Complete genome sequencing of Anaplasma marginale reveals that the surface is skewed to two superfamilies of outer membrane proteins.</title>
        <authorList>
            <person name="Brayton K.A."/>
            <person name="Kappmeyer L.S."/>
            <person name="Herndon D.R."/>
            <person name="Dark M.J."/>
            <person name="Tibbals D.L."/>
            <person name="Palmer G.H."/>
            <person name="McGuire T.C."/>
            <person name="Knowles D.P. Jr."/>
        </authorList>
    </citation>
    <scope>NUCLEOTIDE SEQUENCE [LARGE SCALE GENOMIC DNA]</scope>
    <source>
        <strain>St. Maries</strain>
    </source>
</reference>
<dbReference type="EMBL" id="CP000030">
    <property type="protein sequence ID" value="AAV87048.1"/>
    <property type="status" value="ALT_INIT"/>
    <property type="molecule type" value="Genomic_DNA"/>
</dbReference>
<dbReference type="RefSeq" id="WP_010266347.1">
    <property type="nucleotide sequence ID" value="NZ_AFMU01000038.1"/>
</dbReference>
<dbReference type="SMR" id="Q5P9I2"/>
<dbReference type="GeneID" id="7398522"/>
<dbReference type="KEGG" id="ama:AM1233"/>
<dbReference type="PATRIC" id="fig|320483.3.peg.1071"/>
<dbReference type="HOGENOM" id="CLU_160655_3_0_5"/>
<dbReference type="GO" id="GO:0015935">
    <property type="term" value="C:small ribosomal subunit"/>
    <property type="evidence" value="ECO:0007669"/>
    <property type="project" value="TreeGrafter"/>
</dbReference>
<dbReference type="GO" id="GO:0070181">
    <property type="term" value="F:small ribosomal subunit rRNA binding"/>
    <property type="evidence" value="ECO:0007669"/>
    <property type="project" value="TreeGrafter"/>
</dbReference>
<dbReference type="GO" id="GO:0003735">
    <property type="term" value="F:structural constituent of ribosome"/>
    <property type="evidence" value="ECO:0007669"/>
    <property type="project" value="InterPro"/>
</dbReference>
<dbReference type="GO" id="GO:0006412">
    <property type="term" value="P:translation"/>
    <property type="evidence" value="ECO:0007669"/>
    <property type="project" value="UniProtKB-UniRule"/>
</dbReference>
<dbReference type="Gene3D" id="1.20.58.110">
    <property type="entry name" value="Ribosomal protein S20"/>
    <property type="match status" value="1"/>
</dbReference>
<dbReference type="HAMAP" id="MF_00500">
    <property type="entry name" value="Ribosomal_bS20"/>
    <property type="match status" value="1"/>
</dbReference>
<dbReference type="InterPro" id="IPR002583">
    <property type="entry name" value="Ribosomal_bS20"/>
</dbReference>
<dbReference type="InterPro" id="IPR036510">
    <property type="entry name" value="Ribosomal_bS20_sf"/>
</dbReference>
<dbReference type="NCBIfam" id="TIGR00029">
    <property type="entry name" value="S20"/>
    <property type="match status" value="1"/>
</dbReference>
<dbReference type="PANTHER" id="PTHR33398">
    <property type="entry name" value="30S RIBOSOMAL PROTEIN S20"/>
    <property type="match status" value="1"/>
</dbReference>
<dbReference type="PANTHER" id="PTHR33398:SF1">
    <property type="entry name" value="SMALL RIBOSOMAL SUBUNIT PROTEIN BS20C"/>
    <property type="match status" value="1"/>
</dbReference>
<dbReference type="Pfam" id="PF01649">
    <property type="entry name" value="Ribosomal_S20p"/>
    <property type="match status" value="1"/>
</dbReference>
<dbReference type="SUPFAM" id="SSF46992">
    <property type="entry name" value="Ribosomal protein S20"/>
    <property type="match status" value="1"/>
</dbReference>
<accession>Q5P9I2</accession>